<proteinExistence type="inferred from homology"/>
<name>RL20_BURM7</name>
<evidence type="ECO:0000255" key="1">
    <source>
        <dbReference type="HAMAP-Rule" id="MF_00382"/>
    </source>
</evidence>
<evidence type="ECO:0000305" key="2"/>
<organism>
    <name type="scientific">Burkholderia mallei (strain NCTC 10247)</name>
    <dbReference type="NCBI Taxonomy" id="320389"/>
    <lineage>
        <taxon>Bacteria</taxon>
        <taxon>Pseudomonadati</taxon>
        <taxon>Pseudomonadota</taxon>
        <taxon>Betaproteobacteria</taxon>
        <taxon>Burkholderiales</taxon>
        <taxon>Burkholderiaceae</taxon>
        <taxon>Burkholderia</taxon>
        <taxon>pseudomallei group</taxon>
    </lineage>
</organism>
<gene>
    <name evidence="1" type="primary">rplT</name>
    <name type="ordered locus">BMA10247_0966</name>
</gene>
<sequence length="119" mass="13644">MPRVKRGVTARARHKKIINLAKGYRGRRNNVYRIAKQAVMRAGQYAYRDRRNKKRVFRALWITRINAAVRQHDMTYSVFINGLKKASIELDRKVLADMAVFDKAAFAAIVKQVKAAVAA</sequence>
<dbReference type="EMBL" id="CP000548">
    <property type="protein sequence ID" value="ABO04539.1"/>
    <property type="molecule type" value="Genomic_DNA"/>
</dbReference>
<dbReference type="RefSeq" id="WP_004192938.1">
    <property type="nucleotide sequence ID" value="NZ_CP007802.1"/>
</dbReference>
<dbReference type="SMR" id="A3MJU1"/>
<dbReference type="GeneID" id="98102114"/>
<dbReference type="KEGG" id="bmaz:BM44_2120"/>
<dbReference type="KEGG" id="bmn:BMA10247_0966"/>
<dbReference type="PATRIC" id="fig|320389.8.peg.2375"/>
<dbReference type="GO" id="GO:1990904">
    <property type="term" value="C:ribonucleoprotein complex"/>
    <property type="evidence" value="ECO:0007669"/>
    <property type="project" value="UniProtKB-KW"/>
</dbReference>
<dbReference type="GO" id="GO:0005840">
    <property type="term" value="C:ribosome"/>
    <property type="evidence" value="ECO:0007669"/>
    <property type="project" value="UniProtKB-KW"/>
</dbReference>
<dbReference type="GO" id="GO:0019843">
    <property type="term" value="F:rRNA binding"/>
    <property type="evidence" value="ECO:0007669"/>
    <property type="project" value="UniProtKB-UniRule"/>
</dbReference>
<dbReference type="GO" id="GO:0003735">
    <property type="term" value="F:structural constituent of ribosome"/>
    <property type="evidence" value="ECO:0007669"/>
    <property type="project" value="InterPro"/>
</dbReference>
<dbReference type="GO" id="GO:0000027">
    <property type="term" value="P:ribosomal large subunit assembly"/>
    <property type="evidence" value="ECO:0007669"/>
    <property type="project" value="UniProtKB-UniRule"/>
</dbReference>
<dbReference type="GO" id="GO:0006412">
    <property type="term" value="P:translation"/>
    <property type="evidence" value="ECO:0007669"/>
    <property type="project" value="InterPro"/>
</dbReference>
<dbReference type="CDD" id="cd07026">
    <property type="entry name" value="Ribosomal_L20"/>
    <property type="match status" value="1"/>
</dbReference>
<dbReference type="FunFam" id="1.10.1900.20:FF:000001">
    <property type="entry name" value="50S ribosomal protein L20"/>
    <property type="match status" value="1"/>
</dbReference>
<dbReference type="Gene3D" id="6.10.160.10">
    <property type="match status" value="1"/>
</dbReference>
<dbReference type="Gene3D" id="1.10.1900.20">
    <property type="entry name" value="Ribosomal protein L20"/>
    <property type="match status" value="1"/>
</dbReference>
<dbReference type="HAMAP" id="MF_00382">
    <property type="entry name" value="Ribosomal_bL20"/>
    <property type="match status" value="1"/>
</dbReference>
<dbReference type="InterPro" id="IPR005813">
    <property type="entry name" value="Ribosomal_bL20"/>
</dbReference>
<dbReference type="InterPro" id="IPR049946">
    <property type="entry name" value="RIBOSOMAL_L20_CS"/>
</dbReference>
<dbReference type="InterPro" id="IPR035566">
    <property type="entry name" value="Ribosomal_protein_bL20_C"/>
</dbReference>
<dbReference type="NCBIfam" id="TIGR01032">
    <property type="entry name" value="rplT_bact"/>
    <property type="match status" value="1"/>
</dbReference>
<dbReference type="PANTHER" id="PTHR10986">
    <property type="entry name" value="39S RIBOSOMAL PROTEIN L20"/>
    <property type="match status" value="1"/>
</dbReference>
<dbReference type="Pfam" id="PF00453">
    <property type="entry name" value="Ribosomal_L20"/>
    <property type="match status" value="1"/>
</dbReference>
<dbReference type="PRINTS" id="PR00062">
    <property type="entry name" value="RIBOSOMALL20"/>
</dbReference>
<dbReference type="SUPFAM" id="SSF74731">
    <property type="entry name" value="Ribosomal protein L20"/>
    <property type="match status" value="1"/>
</dbReference>
<dbReference type="PROSITE" id="PS00937">
    <property type="entry name" value="RIBOSOMAL_L20"/>
    <property type="match status" value="1"/>
</dbReference>
<keyword id="KW-0687">Ribonucleoprotein</keyword>
<keyword id="KW-0689">Ribosomal protein</keyword>
<keyword id="KW-0694">RNA-binding</keyword>
<keyword id="KW-0699">rRNA-binding</keyword>
<protein>
    <recommendedName>
        <fullName evidence="1">Large ribosomal subunit protein bL20</fullName>
    </recommendedName>
    <alternativeName>
        <fullName evidence="2">50S ribosomal protein L20</fullName>
    </alternativeName>
</protein>
<accession>A3MJU1</accession>
<comment type="function">
    <text evidence="1">Binds directly to 23S ribosomal RNA and is necessary for the in vitro assembly process of the 50S ribosomal subunit. It is not involved in the protein synthesizing functions of that subunit.</text>
</comment>
<comment type="similarity">
    <text evidence="1">Belongs to the bacterial ribosomal protein bL20 family.</text>
</comment>
<feature type="chain" id="PRO_1000048939" description="Large ribosomal subunit protein bL20">
    <location>
        <begin position="1"/>
        <end position="119"/>
    </location>
</feature>
<reference key="1">
    <citation type="journal article" date="2010" name="Genome Biol. Evol.">
        <title>Continuing evolution of Burkholderia mallei through genome reduction and large-scale rearrangements.</title>
        <authorList>
            <person name="Losada L."/>
            <person name="Ronning C.M."/>
            <person name="DeShazer D."/>
            <person name="Woods D."/>
            <person name="Fedorova N."/>
            <person name="Kim H.S."/>
            <person name="Shabalina S.A."/>
            <person name="Pearson T.R."/>
            <person name="Brinkac L."/>
            <person name="Tan P."/>
            <person name="Nandi T."/>
            <person name="Crabtree J."/>
            <person name="Badger J."/>
            <person name="Beckstrom-Sternberg S."/>
            <person name="Saqib M."/>
            <person name="Schutzer S.E."/>
            <person name="Keim P."/>
            <person name="Nierman W.C."/>
        </authorList>
    </citation>
    <scope>NUCLEOTIDE SEQUENCE [LARGE SCALE GENOMIC DNA]</scope>
    <source>
        <strain>NCTC 10247</strain>
    </source>
</reference>